<reference key="1">
    <citation type="journal article" date="1991" name="J. Biol. Chem.">
        <title>Messenger RNA sequence and expression of rat pancreatitis-associated protein, a lectin-related protein overexpressed during acute experimental pancreatitis.</title>
        <authorList>
            <person name="Iovanna J."/>
            <person name="Orelle B."/>
            <person name="Keim V."/>
            <person name="Dagorn J.-C."/>
        </authorList>
    </citation>
    <scope>NUCLEOTIDE SEQUENCE [MRNA]</scope>
    <scope>PROTEIN SEQUENCE OF 27-39</scope>
    <scope>INDUCTION</scope>
    <source>
        <strain>Sprague-Dawley</strain>
        <tissue>Pancreas</tissue>
    </source>
</reference>
<reference key="2">
    <citation type="journal article" date="1993" name="Am. J. Physiol.">
        <title>PAP, a pancreatic secretory protein induced during acute pancreatitis, is expressed in rat intestine.</title>
        <authorList>
            <person name="Iovanna J.L."/>
            <person name="Keim V."/>
            <person name="Bosshard A."/>
            <person name="Orelle B."/>
            <person name="Frigerio J.-M."/>
            <person name="Dusetti N."/>
            <person name="Dagorn J.-C."/>
        </authorList>
    </citation>
    <scope>NUCLEOTIDE SEQUENCE [MRNA]</scope>
    <scope>TISSUE SPECIFICITY</scope>
    <scope>INDUCTION</scope>
    <source>
        <tissue>Intestine</tissue>
    </source>
</reference>
<reference key="3">
    <citation type="journal article" date="1993" name="J. Biol. Chem.">
        <title>Structural organization of the gene encoding the rat pancreatitis-associated protein. Analysis of its evolutionary history reveals an ancient divergence from the other carbohydrate-recognition domain-containing genes.</title>
        <authorList>
            <person name="Dusetti N.J."/>
            <person name="Frigerio J.-M."/>
            <person name="Keim V."/>
            <person name="Dagorn J.-C."/>
            <person name="Iovanna J."/>
        </authorList>
    </citation>
    <scope>NUCLEOTIDE SEQUENCE [GENOMIC DNA]</scope>
    <source>
        <strain>Wistar</strain>
        <tissue>Liver</tissue>
    </source>
</reference>
<reference key="4">
    <citation type="journal article" date="1992" name="Gene">
        <title>Sequence of a cDNA clone encoding a rat Reg-2 protein.</title>
        <authorList>
            <person name="Kamimura T."/>
            <person name="West C."/>
            <person name="Beutler E."/>
        </authorList>
    </citation>
    <scope>NUCLEOTIDE SEQUENCE [MRNA]</scope>
</reference>
<reference key="5">
    <citation type="journal article" date="1995" name="Endocrinology">
        <title>Molecular cloning and expression of peptide 23, a growth hormone-releasing hormone-inducible pituitary protein.</title>
        <authorList>
            <person name="Katsumata N."/>
            <person name="Chakraborty C."/>
            <person name="Myal Y."/>
            <person name="Schroedter I.C."/>
            <person name="Murphy L.J."/>
            <person name="Shiu R.P."/>
            <person name="Friesen H.G."/>
        </authorList>
    </citation>
    <scope>NUCLEOTIDE SEQUENCE [MRNA]</scope>
    <scope>PARTIAL PROTEIN SEQUENCE</scope>
    <scope>INDUCTION</scope>
    <source>
        <strain>Sprague-Dawley</strain>
        <tissue>Pituitary</tissue>
    </source>
</reference>
<comment type="function">
    <text evidence="2">Bactericidal C-type lectin which acts against several intestinal Gram-positive bacteria and Gram-negative bacteria. Lacks antibacterial activity against S.typhimurium. May play a role in protection against infection with S.enteritidis by inhibiting its translocation from the gut lumen into intestinal tissues and further extraintestinal tissues.</text>
</comment>
<comment type="function">
    <text evidence="2">Acts as a hormone in response to different stimuli. Secreted by different cell types to activate its receptor EXTL3 and induce cell specific signaling pathways. In pancreas, is able stimulate cell proliferation.</text>
</comment>
<comment type="activity regulation">
    <molecule>Regenerating islet-derived protein 3-beta 15 kDa form</molecule>
    <text evidence="3">Lipopolysaccharide inhibits pore-forming activity, explaining why is bactericidal for Gram-positive but not Gram-negative bacteria.</text>
</comment>
<comment type="subunit">
    <molecule>Regenerating islet-derived protein 3-beta 15 kDa form</molecule>
    <text evidence="3">Forms a hexameric membrane-permeabilizing oligomeric pore on membrane phospholipids. The hexamer is formed by three dimers related by helical symmetry. Forms filaments, filamentation traps pore complexes and limits damage to host cells. Interacts with EXTL3.</text>
</comment>
<comment type="subcellular location">
    <subcellularLocation>
        <location evidence="2">Secreted</location>
    </subcellularLocation>
    <text evidence="2">Found in the apical region of pancreatic acinar cells.</text>
</comment>
<comment type="tissue specificity">
    <text evidence="7">Constitutively expressed in intestine.</text>
</comment>
<comment type="induction">
    <text evidence="5 6 7">Appears in pancreatic juice after induction of pancreatic inflammation. Secreted also by pituitary cells; the secretion there is stimulated by GH-releasing hormone and inhibited by somatostatin.</text>
</comment>
<comment type="domain">
    <text evidence="3">The EPN motif is essential for recognition of the peptidoglycan carbohydrate backbone and for efficient bacterial killing with Glu-114 playing a key role in peptidoglycan binding and bactericidal activity.</text>
</comment>
<comment type="PTM">
    <text evidence="2">Proteolytic processing by trypsin removes an inhibitory N-terminal propeptide and is essential for peptidoglycan binding and antibacterial activity.</text>
</comment>
<comment type="disease">
    <text>Overexpressed during the acute phase of pancreatitis.</text>
</comment>
<comment type="sequence caution" evidence="8">
    <conflict type="erroneous initiation">
        <sequence resource="EMBL-CDS" id="AAA41805"/>
    </conflict>
    <text>Extended N-terminus.</text>
</comment>
<evidence type="ECO:0000250" key="1"/>
<evidence type="ECO:0000250" key="2">
    <source>
        <dbReference type="UniProtKB" id="P35230"/>
    </source>
</evidence>
<evidence type="ECO:0000250" key="3">
    <source>
        <dbReference type="UniProtKB" id="Q06141"/>
    </source>
</evidence>
<evidence type="ECO:0000255" key="4">
    <source>
        <dbReference type="PROSITE-ProRule" id="PRU00040"/>
    </source>
</evidence>
<evidence type="ECO:0000269" key="5">
    <source>
    </source>
</evidence>
<evidence type="ECO:0000269" key="6">
    <source>
    </source>
</evidence>
<evidence type="ECO:0000269" key="7">
    <source>
    </source>
</evidence>
<evidence type="ECO:0000305" key="8"/>
<evidence type="ECO:0000312" key="9">
    <source>
        <dbReference type="RGD" id="3254"/>
    </source>
</evidence>
<name>REG3B_RAT</name>
<protein>
    <recommendedName>
        <fullName evidence="8">Regenerating islet-derived protein 3-beta</fullName>
        <shortName>REG-3-beta</shortName>
    </recommendedName>
    <alternativeName>
        <fullName>Pancreatitis-associated protein 1</fullName>
    </alternativeName>
    <alternativeName>
        <fullName>Peptide 23</fullName>
    </alternativeName>
    <alternativeName>
        <fullName>REG-2</fullName>
    </alternativeName>
    <alternativeName>
        <fullName>Regenerating islet-derived protein III-beta</fullName>
        <shortName>Reg III-beta</shortName>
    </alternativeName>
    <component>
        <recommendedName>
            <fullName>Regenerating islet-derived protein 3-beta 16.5 kDa form</fullName>
        </recommendedName>
    </component>
    <component>
        <recommendedName>
            <fullName>Regenerating islet-derived protein 3-beta 15 kDa form</fullName>
        </recommendedName>
    </component>
</protein>
<organism>
    <name type="scientific">Rattus norvegicus</name>
    <name type="common">Rat</name>
    <dbReference type="NCBI Taxonomy" id="10116"/>
    <lineage>
        <taxon>Eukaryota</taxon>
        <taxon>Metazoa</taxon>
        <taxon>Chordata</taxon>
        <taxon>Craniata</taxon>
        <taxon>Vertebrata</taxon>
        <taxon>Euteleostomi</taxon>
        <taxon>Mammalia</taxon>
        <taxon>Eutheria</taxon>
        <taxon>Euarchontoglires</taxon>
        <taxon>Glires</taxon>
        <taxon>Rodentia</taxon>
        <taxon>Myomorpha</taxon>
        <taxon>Muroidea</taxon>
        <taxon>Muridae</taxon>
        <taxon>Murinae</taxon>
        <taxon>Rattus</taxon>
    </lineage>
</organism>
<accession>P25031</accession>
<accession>Q64102</accession>
<accession>Q64231</accession>
<keyword id="KW-0011">Acute phase</keyword>
<keyword id="KW-0929">Antimicrobial</keyword>
<keyword id="KW-0903">Direct protein sequencing</keyword>
<keyword id="KW-1015">Disulfide bond</keyword>
<keyword id="KW-0395">Inflammatory response</keyword>
<keyword id="KW-0430">Lectin</keyword>
<keyword id="KW-0479">Metal-binding</keyword>
<keyword id="KW-1185">Reference proteome</keyword>
<keyword id="KW-0964">Secreted</keyword>
<keyword id="KW-0732">Signal</keyword>
<keyword id="KW-0862">Zinc</keyword>
<proteinExistence type="evidence at protein level"/>
<gene>
    <name evidence="9" type="primary">Reg3b</name>
    <name type="synonym">Pap</name>
    <name type="synonym">Pap1</name>
    <name type="synonym">Reg2</name>
</gene>
<feature type="signal peptide" evidence="5">
    <location>
        <begin position="1"/>
        <end position="26"/>
    </location>
</feature>
<feature type="chain" id="PRO_0000017433" description="Regenerating islet-derived protein 3-beta 16.5 kDa form">
    <location>
        <begin position="27"/>
        <end position="175"/>
    </location>
</feature>
<feature type="propeptide" id="PRO_0000422749" evidence="1">
    <location>
        <begin position="27"/>
        <end position="37"/>
    </location>
</feature>
<feature type="chain" id="PRO_0000422750" description="Regenerating islet-derived protein 3-beta 15 kDa form">
    <location>
        <begin position="38"/>
        <end position="175"/>
    </location>
</feature>
<feature type="domain" description="C-type lectin" evidence="4">
    <location>
        <begin position="47"/>
        <end position="172"/>
    </location>
</feature>
<feature type="short sequence motif" description="EPN" evidence="3">
    <location>
        <begin position="114"/>
        <end position="116"/>
    </location>
</feature>
<feature type="binding site" evidence="3">
    <location>
        <position position="107"/>
    </location>
    <ligand>
        <name>Zn(2+)</name>
        <dbReference type="ChEBI" id="CHEBI:29105"/>
    </ligand>
</feature>
<feature type="binding site" evidence="3">
    <location>
        <position position="121"/>
    </location>
    <ligand>
        <name>Zn(2+)</name>
        <dbReference type="ChEBI" id="CHEBI:29105"/>
    </ligand>
</feature>
<feature type="disulfide bond" evidence="4">
    <location>
        <begin position="40"/>
        <end position="51"/>
    </location>
</feature>
<feature type="disulfide bond" evidence="4">
    <location>
        <begin position="68"/>
        <end position="171"/>
    </location>
</feature>
<feature type="disulfide bond" evidence="4">
    <location>
        <begin position="146"/>
        <end position="163"/>
    </location>
</feature>
<feature type="sequence conflict" description="In Ref. 4; AAB23103." evidence="8" ref="4">
    <original>F</original>
    <variation>S</variation>
    <location>
        <position position="7"/>
    </location>
</feature>
<feature type="sequence conflict" description="In Ref. 5; AAB33848." evidence="8" ref="5">
    <original>S</original>
    <variation>T</variation>
    <location>
        <position position="123"/>
    </location>
</feature>
<dbReference type="EMBL" id="M55149">
    <property type="protein sequence ID" value="AAA41807.1"/>
    <property type="molecule type" value="mRNA"/>
</dbReference>
<dbReference type="EMBL" id="M98049">
    <property type="protein sequence ID" value="AAA16341.1"/>
    <property type="molecule type" value="mRNA"/>
</dbReference>
<dbReference type="EMBL" id="L07127">
    <property type="protein sequence ID" value="AAA41805.1"/>
    <property type="status" value="ALT_INIT"/>
    <property type="molecule type" value="Genomic_DNA"/>
</dbReference>
<dbReference type="EMBL" id="S43715">
    <property type="protein sequence ID" value="AAB23103.1"/>
    <property type="molecule type" value="mRNA"/>
</dbReference>
<dbReference type="EMBL" id="S77413">
    <property type="protein sequence ID" value="AAB33848.2"/>
    <property type="molecule type" value="mRNA"/>
</dbReference>
<dbReference type="PIR" id="A37456">
    <property type="entry name" value="A41719"/>
</dbReference>
<dbReference type="RefSeq" id="NP_445741.1">
    <property type="nucleotide sequence ID" value="NM_053289.1"/>
</dbReference>
<dbReference type="SMR" id="P25031"/>
<dbReference type="FunCoup" id="P25031">
    <property type="interactions" value="5"/>
</dbReference>
<dbReference type="STRING" id="10116.ENSRNOP00000008212"/>
<dbReference type="MEROPS" id="I63.002"/>
<dbReference type="PaxDb" id="10116-ENSRNOP00000008212"/>
<dbReference type="GeneID" id="24618"/>
<dbReference type="KEGG" id="rno:24618"/>
<dbReference type="UCSC" id="RGD:3254">
    <property type="organism name" value="rat"/>
</dbReference>
<dbReference type="AGR" id="RGD:3254"/>
<dbReference type="CTD" id="18489"/>
<dbReference type="RGD" id="3254">
    <property type="gene designation" value="Reg3b"/>
</dbReference>
<dbReference type="eggNOG" id="KOG4297">
    <property type="taxonomic scope" value="Eukaryota"/>
</dbReference>
<dbReference type="HOGENOM" id="CLU_049894_18_0_1"/>
<dbReference type="InParanoid" id="P25031"/>
<dbReference type="OrthoDB" id="418245at2759"/>
<dbReference type="PhylomeDB" id="P25031"/>
<dbReference type="Reactome" id="R-RNO-6803157">
    <property type="pathway name" value="Antimicrobial peptides"/>
</dbReference>
<dbReference type="PRO" id="PR:P25031"/>
<dbReference type="Proteomes" id="UP000002494">
    <property type="component" value="Unplaced"/>
</dbReference>
<dbReference type="GO" id="GO:0045177">
    <property type="term" value="C:apical part of cell"/>
    <property type="evidence" value="ECO:0000314"/>
    <property type="project" value="RGD"/>
</dbReference>
<dbReference type="GO" id="GO:0005615">
    <property type="term" value="C:extracellular space"/>
    <property type="evidence" value="ECO:0000314"/>
    <property type="project" value="RGD"/>
</dbReference>
<dbReference type="GO" id="GO:0032991">
    <property type="term" value="C:protein-containing complex"/>
    <property type="evidence" value="ECO:0000314"/>
    <property type="project" value="RGD"/>
</dbReference>
<dbReference type="GO" id="GO:0042588">
    <property type="term" value="C:zymogen granule"/>
    <property type="evidence" value="ECO:0000314"/>
    <property type="project" value="RGD"/>
</dbReference>
<dbReference type="GO" id="GO:0019838">
    <property type="term" value="F:growth factor binding"/>
    <property type="evidence" value="ECO:0000353"/>
    <property type="project" value="RGD"/>
</dbReference>
<dbReference type="GO" id="GO:0005179">
    <property type="term" value="F:hormone activity"/>
    <property type="evidence" value="ECO:0000266"/>
    <property type="project" value="RGD"/>
</dbReference>
<dbReference type="GO" id="GO:0042802">
    <property type="term" value="F:identical protein binding"/>
    <property type="evidence" value="ECO:0000353"/>
    <property type="project" value="RGD"/>
</dbReference>
<dbReference type="GO" id="GO:0046872">
    <property type="term" value="F:metal ion binding"/>
    <property type="evidence" value="ECO:0007669"/>
    <property type="project" value="UniProtKB-KW"/>
</dbReference>
<dbReference type="GO" id="GO:0070492">
    <property type="term" value="F:oligosaccharide binding"/>
    <property type="evidence" value="ECO:0000318"/>
    <property type="project" value="GO_Central"/>
</dbReference>
<dbReference type="GO" id="GO:0042834">
    <property type="term" value="F:peptidoglycan binding"/>
    <property type="evidence" value="ECO:0000318"/>
    <property type="project" value="GO_Central"/>
</dbReference>
<dbReference type="GO" id="GO:0038023">
    <property type="term" value="F:signaling receptor activity"/>
    <property type="evidence" value="ECO:0000318"/>
    <property type="project" value="GO_Central"/>
</dbReference>
<dbReference type="GO" id="GO:0006953">
    <property type="term" value="P:acute-phase response"/>
    <property type="evidence" value="ECO:0007669"/>
    <property type="project" value="UniProtKB-KW"/>
</dbReference>
<dbReference type="GO" id="GO:0061844">
    <property type="term" value="P:antimicrobial humoral immune response mediated by antimicrobial peptide"/>
    <property type="evidence" value="ECO:0000318"/>
    <property type="project" value="GO_Central"/>
</dbReference>
<dbReference type="GO" id="GO:1903577">
    <property type="term" value="P:cellular response to L-arginine"/>
    <property type="evidence" value="ECO:0000270"/>
    <property type="project" value="RGD"/>
</dbReference>
<dbReference type="GO" id="GO:0071356">
    <property type="term" value="P:cellular response to tumor necrosis factor"/>
    <property type="evidence" value="ECO:0000270"/>
    <property type="project" value="RGD"/>
</dbReference>
<dbReference type="GO" id="GO:0071466">
    <property type="term" value="P:cellular response to xenobiotic stimulus"/>
    <property type="evidence" value="ECO:0000270"/>
    <property type="project" value="RGD"/>
</dbReference>
<dbReference type="GO" id="GO:0050829">
    <property type="term" value="P:defense response to Gram-negative bacterium"/>
    <property type="evidence" value="ECO:0000250"/>
    <property type="project" value="UniProtKB"/>
</dbReference>
<dbReference type="GO" id="GO:0050830">
    <property type="term" value="P:defense response to Gram-positive bacterium"/>
    <property type="evidence" value="ECO:0000250"/>
    <property type="project" value="UniProtKB"/>
</dbReference>
<dbReference type="GO" id="GO:0044849">
    <property type="term" value="P:estrous cycle"/>
    <property type="evidence" value="ECO:0000270"/>
    <property type="project" value="RGD"/>
</dbReference>
<dbReference type="GO" id="GO:0007565">
    <property type="term" value="P:female pregnancy"/>
    <property type="evidence" value="ECO:0000270"/>
    <property type="project" value="RGD"/>
</dbReference>
<dbReference type="GO" id="GO:0007494">
    <property type="term" value="P:midgut development"/>
    <property type="evidence" value="ECO:0000270"/>
    <property type="project" value="RGD"/>
</dbReference>
<dbReference type="GO" id="GO:0043066">
    <property type="term" value="P:negative regulation of apoptotic process"/>
    <property type="evidence" value="ECO:0000270"/>
    <property type="project" value="RGD"/>
</dbReference>
<dbReference type="GO" id="GO:1900408">
    <property type="term" value="P:negative regulation of cellular response to oxidative stress"/>
    <property type="evidence" value="ECO:0000314"/>
    <property type="project" value="RGD"/>
</dbReference>
<dbReference type="GO" id="GO:0106015">
    <property type="term" value="P:negative regulation of inflammatory response to wounding"/>
    <property type="evidence" value="ECO:0000266"/>
    <property type="project" value="RGD"/>
</dbReference>
<dbReference type="GO" id="GO:0045617">
    <property type="term" value="P:negative regulation of keratinocyte differentiation"/>
    <property type="evidence" value="ECO:0000266"/>
    <property type="project" value="RGD"/>
</dbReference>
<dbReference type="GO" id="GO:0008284">
    <property type="term" value="P:positive regulation of cell population proliferation"/>
    <property type="evidence" value="ECO:0000315"/>
    <property type="project" value="RGD"/>
</dbReference>
<dbReference type="GO" id="GO:0010838">
    <property type="term" value="P:positive regulation of keratinocyte proliferation"/>
    <property type="evidence" value="ECO:0000266"/>
    <property type="project" value="RGD"/>
</dbReference>
<dbReference type="GO" id="GO:0009617">
    <property type="term" value="P:response to bacterium"/>
    <property type="evidence" value="ECO:0000266"/>
    <property type="project" value="RGD"/>
</dbReference>
<dbReference type="GO" id="GO:0032355">
    <property type="term" value="P:response to estradiol"/>
    <property type="evidence" value="ECO:0000270"/>
    <property type="project" value="RGD"/>
</dbReference>
<dbReference type="GO" id="GO:0031667">
    <property type="term" value="P:response to nutrient levels"/>
    <property type="evidence" value="ECO:0000270"/>
    <property type="project" value="RGD"/>
</dbReference>
<dbReference type="GO" id="GO:0043434">
    <property type="term" value="P:response to peptide hormone"/>
    <property type="evidence" value="ECO:0000270"/>
    <property type="project" value="RGD"/>
</dbReference>
<dbReference type="GO" id="GO:0042594">
    <property type="term" value="P:response to starvation"/>
    <property type="evidence" value="ECO:0000270"/>
    <property type="project" value="RGD"/>
</dbReference>
<dbReference type="GO" id="GO:0009611">
    <property type="term" value="P:response to wounding"/>
    <property type="evidence" value="ECO:0000266"/>
    <property type="project" value="RGD"/>
</dbReference>
<dbReference type="CDD" id="cd03594">
    <property type="entry name" value="CLECT_REG-1_like"/>
    <property type="match status" value="1"/>
</dbReference>
<dbReference type="FunFam" id="3.10.100.10:FF:000015">
    <property type="entry name" value="C-type lectin Cal"/>
    <property type="match status" value="1"/>
</dbReference>
<dbReference type="Gene3D" id="3.10.100.10">
    <property type="entry name" value="Mannose-Binding Protein A, subunit A"/>
    <property type="match status" value="1"/>
</dbReference>
<dbReference type="InterPro" id="IPR001304">
    <property type="entry name" value="C-type_lectin-like"/>
</dbReference>
<dbReference type="InterPro" id="IPR016186">
    <property type="entry name" value="C-type_lectin-like/link_sf"/>
</dbReference>
<dbReference type="InterPro" id="IPR050111">
    <property type="entry name" value="C-type_lectin/snaclec_domain"/>
</dbReference>
<dbReference type="InterPro" id="IPR018378">
    <property type="entry name" value="C-type_lectin_CS"/>
</dbReference>
<dbReference type="InterPro" id="IPR016187">
    <property type="entry name" value="CTDL_fold"/>
</dbReference>
<dbReference type="PANTHER" id="PTHR22803">
    <property type="entry name" value="MANNOSE, PHOSPHOLIPASE, LECTIN RECEPTOR RELATED"/>
    <property type="match status" value="1"/>
</dbReference>
<dbReference type="Pfam" id="PF00059">
    <property type="entry name" value="Lectin_C"/>
    <property type="match status" value="1"/>
</dbReference>
<dbReference type="PRINTS" id="PR01504">
    <property type="entry name" value="PNCREATITSAP"/>
</dbReference>
<dbReference type="SMART" id="SM00034">
    <property type="entry name" value="CLECT"/>
    <property type="match status" value="1"/>
</dbReference>
<dbReference type="SUPFAM" id="SSF56436">
    <property type="entry name" value="C-type lectin-like"/>
    <property type="match status" value="1"/>
</dbReference>
<dbReference type="PROSITE" id="PS00615">
    <property type="entry name" value="C_TYPE_LECTIN_1"/>
    <property type="match status" value="1"/>
</dbReference>
<dbReference type="PROSITE" id="PS50041">
    <property type="entry name" value="C_TYPE_LECTIN_2"/>
    <property type="match status" value="1"/>
</dbReference>
<sequence>MLHRLAFPVMSWMLLSCLMLLSQVQGEDSPKKIPSARISCPKGSQAYGSYCYALFQIPQTWFDAELACQKRPEGHLVSVLNVAEASFLASMVKNTGNSYQYTWIGLHDPTLGGEPNGGGWEWSNNDIMNYVNWERNPSTALDRGFCGSLSRSSGFLRWRDTTCEVKLPYVCKFTG</sequence>